<reference key="1">
    <citation type="journal article" date="2004" name="Nature">
        <title>Genome evolution in yeasts.</title>
        <authorList>
            <person name="Dujon B."/>
            <person name="Sherman D."/>
            <person name="Fischer G."/>
            <person name="Durrens P."/>
            <person name="Casaregola S."/>
            <person name="Lafontaine I."/>
            <person name="de Montigny J."/>
            <person name="Marck C."/>
            <person name="Neuveglise C."/>
            <person name="Talla E."/>
            <person name="Goffard N."/>
            <person name="Frangeul L."/>
            <person name="Aigle M."/>
            <person name="Anthouard V."/>
            <person name="Babour A."/>
            <person name="Barbe V."/>
            <person name="Barnay S."/>
            <person name="Blanchin S."/>
            <person name="Beckerich J.-M."/>
            <person name="Beyne E."/>
            <person name="Bleykasten C."/>
            <person name="Boisrame A."/>
            <person name="Boyer J."/>
            <person name="Cattolico L."/>
            <person name="Confanioleri F."/>
            <person name="de Daruvar A."/>
            <person name="Despons L."/>
            <person name="Fabre E."/>
            <person name="Fairhead C."/>
            <person name="Ferry-Dumazet H."/>
            <person name="Groppi A."/>
            <person name="Hantraye F."/>
            <person name="Hennequin C."/>
            <person name="Jauniaux N."/>
            <person name="Joyet P."/>
            <person name="Kachouri R."/>
            <person name="Kerrest A."/>
            <person name="Koszul R."/>
            <person name="Lemaire M."/>
            <person name="Lesur I."/>
            <person name="Ma L."/>
            <person name="Muller H."/>
            <person name="Nicaud J.-M."/>
            <person name="Nikolski M."/>
            <person name="Oztas S."/>
            <person name="Ozier-Kalogeropoulos O."/>
            <person name="Pellenz S."/>
            <person name="Potier S."/>
            <person name="Richard G.-F."/>
            <person name="Straub M.-L."/>
            <person name="Suleau A."/>
            <person name="Swennen D."/>
            <person name="Tekaia F."/>
            <person name="Wesolowski-Louvel M."/>
            <person name="Westhof E."/>
            <person name="Wirth B."/>
            <person name="Zeniou-Meyer M."/>
            <person name="Zivanovic Y."/>
            <person name="Bolotin-Fukuhara M."/>
            <person name="Thierry A."/>
            <person name="Bouchier C."/>
            <person name="Caudron B."/>
            <person name="Scarpelli C."/>
            <person name="Gaillardin C."/>
            <person name="Weissenbach J."/>
            <person name="Wincker P."/>
            <person name="Souciet J.-L."/>
        </authorList>
    </citation>
    <scope>NUCLEOTIDE SEQUENCE [LARGE SCALE GENOMIC DNA]</scope>
    <source>
        <strain>ATCC 8585 / CBS 2359 / DSM 70799 / NBRC 1267 / NRRL Y-1140 / WM37</strain>
    </source>
</reference>
<reference evidence="6" key="2">
    <citation type="journal article" date="2020" name="Structure">
        <title>Cryoelectron Microscopy Structure of a Yeast Centromeric Nucleosome at 2.7A Resolution.</title>
        <authorList>
            <person name="Migl D."/>
            <person name="Kschonsak M."/>
            <person name="Arthur C.P."/>
            <person name="Khin Y."/>
            <person name="Harrison S.C."/>
            <person name="Ciferri C."/>
            <person name="Dimitrova Y.N."/>
        </authorList>
    </citation>
    <scope>STRUCTURE BY ELECTRON MICROSCOPY (2.70 ANGSTROMS)</scope>
    <scope>IDENTIFICATION IN NUCLEOSOMES</scope>
    <scope>SUBCELLULAR LOCATION</scope>
</reference>
<comment type="function">
    <text evidence="2">Core component of nucleosome. Nucleosomes wrap and compact DNA into chromatin, limiting DNA accessibility to the cellular machineries which require DNA as a template. Histones thereby play a central role in transcription regulation, DNA repair, DNA replication and chromosomal stability. DNA accessibility is regulated via a complex set of post-translational modifications of histones, also called histone code, and nucleosome remodeling.</text>
</comment>
<comment type="subunit">
    <text evidence="5">The nucleosome is a histone octamer containing two molecules each of H2A, H2B, H3 and H4 assembled in one H3-H4 heterotetramer and two H2A-H2B heterodimers. The octamer wraps approximately 147 bp of DNA.</text>
</comment>
<comment type="subcellular location">
    <subcellularLocation>
        <location evidence="5">Nucleus</location>
    </subcellularLocation>
    <subcellularLocation>
        <location evidence="5">Chromosome</location>
    </subcellularLocation>
</comment>
<comment type="PTM">
    <text evidence="2">Monoubiquitinated by the UBC2-BRE1 complex to form H2BK123ub1. H2BK123ub1 gives a specific tag for epigenetic transcriptional activation and is also prerequisite for H3K4me and H3K79me formation. H2BK123ub1 also modulates the formation of double-strand breaks during meiosis and is a prerequisite for DNA-damage checkpoint activation (By similarity).</text>
</comment>
<comment type="PTM">
    <text evidence="2">Phosphorylated by STE20 to form H2BS10ph during progression through meiotic prophase. May be correlated with chromosome condensation (By similarity).</text>
</comment>
<comment type="PTM">
    <text evidence="2">Acetylated by GCN5 to form H2BK11ac and H2BK16ac. H2BK16ac can also be formed by ESA1. Acetylation of N-terminal lysines and particularly formation of H2BK11acK16ac has a positive effect on transcription (By similarity).</text>
</comment>
<comment type="PTM">
    <text evidence="2">Sumoylation to form H2BK6su and probably also H2BK16su or H2BK17su, occurs preferentially near the telomeres and represses gene transcription.</text>
</comment>
<comment type="similarity">
    <text evidence="4">Belongs to the histone H2B family.</text>
</comment>
<comment type="caution">
    <text evidence="4">To ensure consistency between histone entries, we follow the 'Brno' nomenclature for histone modifications, with positions referring to those used in the literature for the 'closest' model organism. Due to slight variations in histone sequences between organisms and to the presence of initiator methionine in UniProtKB/Swiss-Prot sequences, the actual positions of modified amino acids in the sequence generally differ. In this entry the following conventions are used: H2BK6ac = acetylated Lys-7; H2BK6su = sumoylated Lys-7; H2BS10ph = phosphorylated Ser-11; H2BK11ac = acetylated Lys-12; H2BK16ac = acetylated Lys-17; H2BK16su = sumoylated Lys-17; H2BK17su = sumoylated Lys-18; H2BK123ub1 = monoubiquitinated Lys-125.</text>
</comment>
<gene>
    <name type="primary">HTB1</name>
    <name type="ordered locus">KLLA0F13310g</name>
</gene>
<name>H2B1_KLULA</name>
<proteinExistence type="evidence at protein level"/>
<protein>
    <recommendedName>
        <fullName>Histone H2B.1</fullName>
    </recommendedName>
</protein>
<accession>Q6CK60</accession>
<dbReference type="EMBL" id="CR382126">
    <property type="protein sequence ID" value="CAG98387.1"/>
    <property type="molecule type" value="Genomic_DNA"/>
</dbReference>
<dbReference type="RefSeq" id="XP_455679.1">
    <property type="nucleotide sequence ID" value="XM_455679.1"/>
</dbReference>
<dbReference type="PDB" id="6UPH">
    <property type="method" value="EM"/>
    <property type="resolution" value="2.70 A"/>
    <property type="chains" value="D/H=1-132"/>
</dbReference>
<dbReference type="PDBsum" id="6UPH"/>
<dbReference type="EMDB" id="EMD-20839"/>
<dbReference type="SMR" id="Q6CK60"/>
<dbReference type="FunCoup" id="Q6CK60">
    <property type="interactions" value="1278"/>
</dbReference>
<dbReference type="STRING" id="284590.Q6CK60"/>
<dbReference type="PaxDb" id="284590-Q6CK60"/>
<dbReference type="KEGG" id="kla:KLLA0_F13310g"/>
<dbReference type="eggNOG" id="KOG1744">
    <property type="taxonomic scope" value="Eukaryota"/>
</dbReference>
<dbReference type="HOGENOM" id="CLU_075666_1_3_1"/>
<dbReference type="InParanoid" id="Q6CK60"/>
<dbReference type="OMA" id="RITIEAC"/>
<dbReference type="Proteomes" id="UP000000598">
    <property type="component" value="Chromosome F"/>
</dbReference>
<dbReference type="GO" id="GO:0043505">
    <property type="term" value="C:CENP-A containing nucleosome"/>
    <property type="evidence" value="ECO:0000314"/>
    <property type="project" value="UniProtKB"/>
</dbReference>
<dbReference type="GO" id="GO:0005634">
    <property type="term" value="C:nucleus"/>
    <property type="evidence" value="ECO:0007669"/>
    <property type="project" value="UniProtKB-SubCell"/>
</dbReference>
<dbReference type="GO" id="GO:0003677">
    <property type="term" value="F:DNA binding"/>
    <property type="evidence" value="ECO:0007669"/>
    <property type="project" value="UniProtKB-KW"/>
</dbReference>
<dbReference type="GO" id="GO:0046982">
    <property type="term" value="F:protein heterodimerization activity"/>
    <property type="evidence" value="ECO:0007669"/>
    <property type="project" value="InterPro"/>
</dbReference>
<dbReference type="GO" id="GO:0030527">
    <property type="term" value="F:structural constituent of chromatin"/>
    <property type="evidence" value="ECO:0007669"/>
    <property type="project" value="InterPro"/>
</dbReference>
<dbReference type="CDD" id="cd22910">
    <property type="entry name" value="HFD_H2B"/>
    <property type="match status" value="1"/>
</dbReference>
<dbReference type="FunFam" id="1.10.20.10:FF:000014">
    <property type="entry name" value="Histone H2B"/>
    <property type="match status" value="1"/>
</dbReference>
<dbReference type="Gene3D" id="1.10.20.10">
    <property type="entry name" value="Histone, subunit A"/>
    <property type="match status" value="1"/>
</dbReference>
<dbReference type="InterPro" id="IPR009072">
    <property type="entry name" value="Histone-fold"/>
</dbReference>
<dbReference type="InterPro" id="IPR007125">
    <property type="entry name" value="Histone_H2A/H2B/H3"/>
</dbReference>
<dbReference type="InterPro" id="IPR000558">
    <property type="entry name" value="Histone_H2B"/>
</dbReference>
<dbReference type="InterPro" id="IPR055333">
    <property type="entry name" value="HISTONE_H2B_site"/>
</dbReference>
<dbReference type="PANTHER" id="PTHR23428">
    <property type="entry name" value="HISTONE H2B"/>
    <property type="match status" value="1"/>
</dbReference>
<dbReference type="Pfam" id="PF00125">
    <property type="entry name" value="Histone"/>
    <property type="match status" value="1"/>
</dbReference>
<dbReference type="PRINTS" id="PR00621">
    <property type="entry name" value="HISTONEH2B"/>
</dbReference>
<dbReference type="SMART" id="SM00427">
    <property type="entry name" value="H2B"/>
    <property type="match status" value="1"/>
</dbReference>
<dbReference type="SUPFAM" id="SSF47113">
    <property type="entry name" value="Histone-fold"/>
    <property type="match status" value="1"/>
</dbReference>
<dbReference type="PROSITE" id="PS00357">
    <property type="entry name" value="HISTONE_H2B"/>
    <property type="match status" value="1"/>
</dbReference>
<organism>
    <name type="scientific">Kluyveromyces lactis (strain ATCC 8585 / CBS 2359 / DSM 70799 / NBRC 1267 / NRRL Y-1140 / WM37)</name>
    <name type="common">Yeast</name>
    <name type="synonym">Candida sphaerica</name>
    <dbReference type="NCBI Taxonomy" id="284590"/>
    <lineage>
        <taxon>Eukaryota</taxon>
        <taxon>Fungi</taxon>
        <taxon>Dikarya</taxon>
        <taxon>Ascomycota</taxon>
        <taxon>Saccharomycotina</taxon>
        <taxon>Saccharomycetes</taxon>
        <taxon>Saccharomycetales</taxon>
        <taxon>Saccharomycetaceae</taxon>
        <taxon>Kluyveromyces</taxon>
    </lineage>
</organism>
<evidence type="ECO:0000250" key="1"/>
<evidence type="ECO:0000250" key="2">
    <source>
        <dbReference type="UniProtKB" id="P02293"/>
    </source>
</evidence>
<evidence type="ECO:0000256" key="3">
    <source>
        <dbReference type="SAM" id="MobiDB-lite"/>
    </source>
</evidence>
<evidence type="ECO:0000305" key="4"/>
<evidence type="ECO:0000305" key="5">
    <source>
    </source>
</evidence>
<evidence type="ECO:0007744" key="6">
    <source>
        <dbReference type="PDB" id="6UPH"/>
    </source>
</evidence>
<evidence type="ECO:0007829" key="7">
    <source>
        <dbReference type="PDB" id="6UPH"/>
    </source>
</evidence>
<feature type="initiator methionine" description="Removed" evidence="1">
    <location>
        <position position="1"/>
    </location>
</feature>
<feature type="chain" id="PRO_0000245296" description="Histone H2B.1">
    <location>
        <begin position="2"/>
        <end position="132"/>
    </location>
</feature>
<feature type="region of interest" description="Disordered" evidence="3">
    <location>
        <begin position="1"/>
        <end position="39"/>
    </location>
</feature>
<feature type="compositionally biased region" description="Low complexity" evidence="3">
    <location>
        <begin position="1"/>
        <end position="13"/>
    </location>
</feature>
<feature type="modified residue" description="N6-acetyllysine; alternate" evidence="2">
    <location>
        <position position="7"/>
    </location>
</feature>
<feature type="modified residue" description="Phosphoserine" evidence="2">
    <location>
        <position position="11"/>
    </location>
</feature>
<feature type="modified residue" description="N6-acetyllysine" evidence="2">
    <location>
        <position position="12"/>
    </location>
</feature>
<feature type="modified residue" description="N6-acetyllysine; alternate" evidence="2">
    <location>
        <position position="17"/>
    </location>
</feature>
<feature type="cross-link" description="Glycyl lysine isopeptide (Lys-Gly) (interchain with G-Cter in SUMO); alternate" evidence="2">
    <location>
        <position position="7"/>
    </location>
</feature>
<feature type="cross-link" description="Glycyl lysine isopeptide (Lys-Gly) (interchain with G-Cter in SUMO); alternate" evidence="2">
    <location>
        <position position="17"/>
    </location>
</feature>
<feature type="cross-link" description="Glycyl lysine isopeptide (Lys-Gly) (interchain with G-Cter in SUMO)" evidence="2">
    <location>
        <position position="18"/>
    </location>
</feature>
<feature type="cross-link" description="Glycyl lysine isopeptide (Lys-Gly) (interchain with G-Cter in ubiquitin)" evidence="2">
    <location>
        <position position="125"/>
    </location>
</feature>
<feature type="helix" evidence="7">
    <location>
        <begin position="43"/>
        <end position="53"/>
    </location>
</feature>
<feature type="helix" evidence="7">
    <location>
        <begin position="61"/>
        <end position="87"/>
    </location>
</feature>
<feature type="turn" evidence="7">
    <location>
        <begin position="88"/>
        <end position="90"/>
    </location>
</feature>
<feature type="helix" evidence="7">
    <location>
        <begin position="96"/>
        <end position="106"/>
    </location>
</feature>
<feature type="helix" evidence="7">
    <location>
        <begin position="110"/>
        <end position="126"/>
    </location>
</feature>
<keyword id="KW-0002">3D-structure</keyword>
<keyword id="KW-0007">Acetylation</keyword>
<keyword id="KW-0158">Chromosome</keyword>
<keyword id="KW-0238">DNA-binding</keyword>
<keyword id="KW-1017">Isopeptide bond</keyword>
<keyword id="KW-0488">Methylation</keyword>
<keyword id="KW-0544">Nucleosome core</keyword>
<keyword id="KW-0539">Nucleus</keyword>
<keyword id="KW-0597">Phosphoprotein</keyword>
<keyword id="KW-1185">Reference proteome</keyword>
<keyword id="KW-0832">Ubl conjugation</keyword>
<sequence length="132" mass="14296">MSAKASKAPASKAPAEKKPAAKKTSSSTDPSKKRTKARKETYSSYIYKVLKQTHPDTGISQKSMSILNSFVNDIFERIATESSKLAAYNKKSTISAREIQTAVRLILPGELAKHAVSEGTRAVTKYSSSTQA</sequence>